<reference key="1">
    <citation type="submission" date="2008-10" db="EMBL/GenBank/DDBJ databases">
        <title>Complete sequence of Desulfovibrio vulgaris str. 'Miyazaki F'.</title>
        <authorList>
            <person name="Lucas S."/>
            <person name="Copeland A."/>
            <person name="Lapidus A."/>
            <person name="Glavina del Rio T."/>
            <person name="Dalin E."/>
            <person name="Tice H."/>
            <person name="Bruce D."/>
            <person name="Goodwin L."/>
            <person name="Pitluck S."/>
            <person name="Sims D."/>
            <person name="Brettin T."/>
            <person name="Detter J.C."/>
            <person name="Han C."/>
            <person name="Larimer F."/>
            <person name="Land M."/>
            <person name="Hauser L."/>
            <person name="Kyrpides N."/>
            <person name="Mikhailova N."/>
            <person name="Hazen T.C."/>
            <person name="Richardson P."/>
        </authorList>
    </citation>
    <scope>NUCLEOTIDE SEQUENCE [LARGE SCALE GENOMIC DNA]</scope>
    <source>
        <strain>DSM 19637 / Miyazaki F</strain>
    </source>
</reference>
<comment type="function">
    <text evidence="1">Catalyzes the condensation of the acetyl group of acetyl-CoA with 3-methyl-2-oxobutanoate (2-ketoisovalerate) to form 3-carboxy-3-hydroxy-4-methylpentanoate (2-isopropylmalate).</text>
</comment>
<comment type="catalytic activity">
    <reaction evidence="1">
        <text>3-methyl-2-oxobutanoate + acetyl-CoA + H2O = (2S)-2-isopropylmalate + CoA + H(+)</text>
        <dbReference type="Rhea" id="RHEA:21524"/>
        <dbReference type="ChEBI" id="CHEBI:1178"/>
        <dbReference type="ChEBI" id="CHEBI:11851"/>
        <dbReference type="ChEBI" id="CHEBI:15377"/>
        <dbReference type="ChEBI" id="CHEBI:15378"/>
        <dbReference type="ChEBI" id="CHEBI:57287"/>
        <dbReference type="ChEBI" id="CHEBI:57288"/>
        <dbReference type="EC" id="2.3.3.13"/>
    </reaction>
</comment>
<comment type="cofactor">
    <cofactor evidence="1">
        <name>Mn(2+)</name>
        <dbReference type="ChEBI" id="CHEBI:29035"/>
    </cofactor>
</comment>
<comment type="pathway">
    <text evidence="1">Amino-acid biosynthesis; L-leucine biosynthesis; L-leucine from 3-methyl-2-oxobutanoate: step 1/4.</text>
</comment>
<comment type="subunit">
    <text evidence="1">Homodimer.</text>
</comment>
<comment type="subcellular location">
    <subcellularLocation>
        <location evidence="1">Cytoplasm</location>
    </subcellularLocation>
</comment>
<comment type="similarity">
    <text evidence="1">Belongs to the alpha-IPM synthase/homocitrate synthase family. LeuA type 1 subfamily.</text>
</comment>
<keyword id="KW-0028">Amino-acid biosynthesis</keyword>
<keyword id="KW-0100">Branched-chain amino acid biosynthesis</keyword>
<keyword id="KW-0963">Cytoplasm</keyword>
<keyword id="KW-0432">Leucine biosynthesis</keyword>
<keyword id="KW-0464">Manganese</keyword>
<keyword id="KW-0479">Metal-binding</keyword>
<keyword id="KW-0808">Transferase</keyword>
<organism>
    <name type="scientific">Nitratidesulfovibrio vulgaris (strain DSM 19637 / Miyazaki F)</name>
    <name type="common">Desulfovibrio vulgaris</name>
    <dbReference type="NCBI Taxonomy" id="883"/>
    <lineage>
        <taxon>Bacteria</taxon>
        <taxon>Pseudomonadati</taxon>
        <taxon>Thermodesulfobacteriota</taxon>
        <taxon>Desulfovibrionia</taxon>
        <taxon>Desulfovibrionales</taxon>
        <taxon>Desulfovibrionaceae</taxon>
        <taxon>Nitratidesulfovibrio</taxon>
    </lineage>
</organism>
<sequence>MTIESGRIRIFDTTLRDGEQSPGATMNLQEKIRLARQLETLGVDIMEAGFPASSQGDFEAVQAIARAVKGVEVAGLCRAMPADIDRAWEAVKVAENPRIHTFLATSPVHMQYKLRKEPDQVVEMAVAAVRHAAKYTSNVEFSAEDASRSNPDFLVRVFEAVINAGATTINVPDTVGYAQPEEFGRLIRYVIENTPNSHKAVFSVHCHNDLGMGVANTLAALKAGARQAEVTISGIGERAGNASLEEIVMALHTRRDFYQLDCGVVTEQLFPTCRLLSMIIGQPIPPNKAIVGANAFAHESGIHQDGMLKNRETYEIMTPESIGKTKTDLVIGKHSGRNAVKNKLDELGYRLEEAQLVTVFEAVKKLADKKKQIYDEDIEALVLEEVYRLPDLYRLVNLSVQCSDTGMPPTAAVVMDVMGEVKRAAGFGVGPIDAVFNVIGEIVGRAPVLERYSVTAITGGTDAQGEVTVRLRQNGSSAVGRGSDPDIILASARAYVNALNRLAKKEEEQEKEGI</sequence>
<protein>
    <recommendedName>
        <fullName evidence="1">2-isopropylmalate synthase</fullName>
        <ecNumber evidence="1">2.3.3.13</ecNumber>
    </recommendedName>
    <alternativeName>
        <fullName evidence="1">Alpha-IPM synthase</fullName>
    </alternativeName>
    <alternativeName>
        <fullName evidence="1">Alpha-isopropylmalate synthase</fullName>
    </alternativeName>
</protein>
<name>LEU1_NITV9</name>
<feature type="chain" id="PRO_1000149178" description="2-isopropylmalate synthase">
    <location>
        <begin position="1"/>
        <end position="514"/>
    </location>
</feature>
<feature type="domain" description="Pyruvate carboxyltransferase" evidence="1">
    <location>
        <begin position="8"/>
        <end position="270"/>
    </location>
</feature>
<feature type="region of interest" description="Regulatory domain" evidence="1">
    <location>
        <begin position="394"/>
        <end position="514"/>
    </location>
</feature>
<feature type="binding site" evidence="1">
    <location>
        <position position="17"/>
    </location>
    <ligand>
        <name>Mn(2+)</name>
        <dbReference type="ChEBI" id="CHEBI:29035"/>
    </ligand>
</feature>
<feature type="binding site" evidence="1">
    <location>
        <position position="205"/>
    </location>
    <ligand>
        <name>Mn(2+)</name>
        <dbReference type="ChEBI" id="CHEBI:29035"/>
    </ligand>
</feature>
<feature type="binding site" evidence="1">
    <location>
        <position position="207"/>
    </location>
    <ligand>
        <name>Mn(2+)</name>
        <dbReference type="ChEBI" id="CHEBI:29035"/>
    </ligand>
</feature>
<feature type="binding site" evidence="1">
    <location>
        <position position="241"/>
    </location>
    <ligand>
        <name>Mn(2+)</name>
        <dbReference type="ChEBI" id="CHEBI:29035"/>
    </ligand>
</feature>
<proteinExistence type="inferred from homology"/>
<dbReference type="EC" id="2.3.3.13" evidence="1"/>
<dbReference type="EMBL" id="CP001197">
    <property type="protein sequence ID" value="ACL08735.1"/>
    <property type="molecule type" value="Genomic_DNA"/>
</dbReference>
<dbReference type="SMR" id="B8DM91"/>
<dbReference type="STRING" id="883.DvMF_1791"/>
<dbReference type="KEGG" id="dvm:DvMF_1791"/>
<dbReference type="eggNOG" id="COG0119">
    <property type="taxonomic scope" value="Bacteria"/>
</dbReference>
<dbReference type="HOGENOM" id="CLU_022158_0_1_7"/>
<dbReference type="OrthoDB" id="9803573at2"/>
<dbReference type="UniPathway" id="UPA00048">
    <property type="reaction ID" value="UER00070"/>
</dbReference>
<dbReference type="GO" id="GO:0005737">
    <property type="term" value="C:cytoplasm"/>
    <property type="evidence" value="ECO:0007669"/>
    <property type="project" value="UniProtKB-SubCell"/>
</dbReference>
<dbReference type="GO" id="GO:0003852">
    <property type="term" value="F:2-isopropylmalate synthase activity"/>
    <property type="evidence" value="ECO:0007669"/>
    <property type="project" value="UniProtKB-UniRule"/>
</dbReference>
<dbReference type="GO" id="GO:0003985">
    <property type="term" value="F:acetyl-CoA C-acetyltransferase activity"/>
    <property type="evidence" value="ECO:0007669"/>
    <property type="project" value="UniProtKB-UniRule"/>
</dbReference>
<dbReference type="GO" id="GO:0030145">
    <property type="term" value="F:manganese ion binding"/>
    <property type="evidence" value="ECO:0007669"/>
    <property type="project" value="UniProtKB-UniRule"/>
</dbReference>
<dbReference type="GO" id="GO:0009098">
    <property type="term" value="P:L-leucine biosynthetic process"/>
    <property type="evidence" value="ECO:0007669"/>
    <property type="project" value="UniProtKB-UniRule"/>
</dbReference>
<dbReference type="CDD" id="cd07940">
    <property type="entry name" value="DRE_TIM_IPMS"/>
    <property type="match status" value="1"/>
</dbReference>
<dbReference type="FunFam" id="1.10.238.260:FF:000001">
    <property type="entry name" value="2-isopropylmalate synthase"/>
    <property type="match status" value="1"/>
</dbReference>
<dbReference type="FunFam" id="3.20.20.70:FF:000010">
    <property type="entry name" value="2-isopropylmalate synthase"/>
    <property type="match status" value="1"/>
</dbReference>
<dbReference type="FunFam" id="3.30.160.270:FF:000003">
    <property type="entry name" value="2-isopropylmalate synthase"/>
    <property type="match status" value="1"/>
</dbReference>
<dbReference type="Gene3D" id="1.10.238.260">
    <property type="match status" value="1"/>
</dbReference>
<dbReference type="Gene3D" id="3.30.160.270">
    <property type="match status" value="1"/>
</dbReference>
<dbReference type="Gene3D" id="3.20.20.70">
    <property type="entry name" value="Aldolase class I"/>
    <property type="match status" value="1"/>
</dbReference>
<dbReference type="HAMAP" id="MF_01025">
    <property type="entry name" value="LeuA_type1"/>
    <property type="match status" value="1"/>
</dbReference>
<dbReference type="InterPro" id="IPR050073">
    <property type="entry name" value="2-IPM_HCS-like"/>
</dbReference>
<dbReference type="InterPro" id="IPR013709">
    <property type="entry name" value="2-isopropylmalate_synth_dimer"/>
</dbReference>
<dbReference type="InterPro" id="IPR002034">
    <property type="entry name" value="AIPM/Hcit_synth_CS"/>
</dbReference>
<dbReference type="InterPro" id="IPR013785">
    <property type="entry name" value="Aldolase_TIM"/>
</dbReference>
<dbReference type="InterPro" id="IPR054691">
    <property type="entry name" value="LeuA/HCS_post-cat"/>
</dbReference>
<dbReference type="InterPro" id="IPR036230">
    <property type="entry name" value="LeuA_allosteric_dom_sf"/>
</dbReference>
<dbReference type="InterPro" id="IPR005671">
    <property type="entry name" value="LeuA_bact_synth"/>
</dbReference>
<dbReference type="InterPro" id="IPR000891">
    <property type="entry name" value="PYR_CT"/>
</dbReference>
<dbReference type="NCBIfam" id="TIGR00973">
    <property type="entry name" value="leuA_bact"/>
    <property type="match status" value="1"/>
</dbReference>
<dbReference type="NCBIfam" id="NF002086">
    <property type="entry name" value="PRK00915.1-3"/>
    <property type="match status" value="1"/>
</dbReference>
<dbReference type="NCBIfam" id="NF002087">
    <property type="entry name" value="PRK00915.1-4"/>
    <property type="match status" value="1"/>
</dbReference>
<dbReference type="PANTHER" id="PTHR10277:SF9">
    <property type="entry name" value="2-ISOPROPYLMALATE SYNTHASE 1, CHLOROPLASTIC-RELATED"/>
    <property type="match status" value="1"/>
</dbReference>
<dbReference type="PANTHER" id="PTHR10277">
    <property type="entry name" value="HOMOCITRATE SYNTHASE-RELATED"/>
    <property type="match status" value="1"/>
</dbReference>
<dbReference type="Pfam" id="PF22617">
    <property type="entry name" value="HCS_D2"/>
    <property type="match status" value="1"/>
</dbReference>
<dbReference type="Pfam" id="PF00682">
    <property type="entry name" value="HMGL-like"/>
    <property type="match status" value="1"/>
</dbReference>
<dbReference type="Pfam" id="PF08502">
    <property type="entry name" value="LeuA_dimer"/>
    <property type="match status" value="1"/>
</dbReference>
<dbReference type="SMART" id="SM00917">
    <property type="entry name" value="LeuA_dimer"/>
    <property type="match status" value="1"/>
</dbReference>
<dbReference type="SUPFAM" id="SSF110921">
    <property type="entry name" value="2-isopropylmalate synthase LeuA, allosteric (dimerisation) domain"/>
    <property type="match status" value="1"/>
</dbReference>
<dbReference type="SUPFAM" id="SSF51569">
    <property type="entry name" value="Aldolase"/>
    <property type="match status" value="1"/>
</dbReference>
<dbReference type="PROSITE" id="PS00815">
    <property type="entry name" value="AIPM_HOMOCIT_SYNTH_1"/>
    <property type="match status" value="1"/>
</dbReference>
<dbReference type="PROSITE" id="PS00816">
    <property type="entry name" value="AIPM_HOMOCIT_SYNTH_2"/>
    <property type="match status" value="1"/>
</dbReference>
<dbReference type="PROSITE" id="PS50991">
    <property type="entry name" value="PYR_CT"/>
    <property type="match status" value="1"/>
</dbReference>
<evidence type="ECO:0000255" key="1">
    <source>
        <dbReference type="HAMAP-Rule" id="MF_01025"/>
    </source>
</evidence>
<gene>
    <name evidence="1" type="primary">leuA</name>
    <name type="ordered locus">DvMF_1791</name>
</gene>
<accession>B8DM91</accession>